<sequence length="465" mass="51677">MESLKIYNTLAREKQTFVPIEPGRVRMYVCGMTVYDYCHVGHARVMVVFDMVQRWLRASGYDVTYVRNITDIDDKIIKRAVENGETIGALTNRFIAAMHEDADALGVQRPDREPRATEYVPQMLSMIGRLQDNGLAYQAADGDVNYAVRKFPGYGKLSGKSLEDLRAGERVAANDAKQDPLDFVLWKSAKADEPAESRWASPWGEGRPGWHIECSAMSCDLLGTHFDLHGGGADLQFPHHENEIAQSEGASGSTFVNTWMHNGFVRVNDEKMSKSLGNFFTIRDVLKVYDPEVVRFFILRSHYRSDLNYSDVHLDDARHALTRLYTALKDVPAEAQARPDWNEPHGKRFREAMHDDFNTPVAMAVLFELATEVNKTRSPALASQLAALGGVMGLLVRDPHAFLQGGVGAAADGLDAAEVEARIEARRAAKAARDFARADGIRADLLAAGIVLEDKPGGVTEWRRA</sequence>
<name>SYC_RALN1</name>
<evidence type="ECO:0000255" key="1">
    <source>
        <dbReference type="HAMAP-Rule" id="MF_00041"/>
    </source>
</evidence>
<comment type="catalytic activity">
    <reaction evidence="1">
        <text>tRNA(Cys) + L-cysteine + ATP = L-cysteinyl-tRNA(Cys) + AMP + diphosphate</text>
        <dbReference type="Rhea" id="RHEA:17773"/>
        <dbReference type="Rhea" id="RHEA-COMP:9661"/>
        <dbReference type="Rhea" id="RHEA-COMP:9679"/>
        <dbReference type="ChEBI" id="CHEBI:30616"/>
        <dbReference type="ChEBI" id="CHEBI:33019"/>
        <dbReference type="ChEBI" id="CHEBI:35235"/>
        <dbReference type="ChEBI" id="CHEBI:78442"/>
        <dbReference type="ChEBI" id="CHEBI:78517"/>
        <dbReference type="ChEBI" id="CHEBI:456215"/>
        <dbReference type="EC" id="6.1.1.16"/>
    </reaction>
</comment>
<comment type="cofactor">
    <cofactor evidence="1">
        <name>Zn(2+)</name>
        <dbReference type="ChEBI" id="CHEBI:29105"/>
    </cofactor>
    <text evidence="1">Binds 1 zinc ion per subunit.</text>
</comment>
<comment type="subunit">
    <text evidence="1">Monomer.</text>
</comment>
<comment type="subcellular location">
    <subcellularLocation>
        <location evidence="1">Cytoplasm</location>
    </subcellularLocation>
</comment>
<comment type="similarity">
    <text evidence="1">Belongs to the class-I aminoacyl-tRNA synthetase family.</text>
</comment>
<keyword id="KW-0030">Aminoacyl-tRNA synthetase</keyword>
<keyword id="KW-0067">ATP-binding</keyword>
<keyword id="KW-0963">Cytoplasm</keyword>
<keyword id="KW-0436">Ligase</keyword>
<keyword id="KW-0479">Metal-binding</keyword>
<keyword id="KW-0547">Nucleotide-binding</keyword>
<keyword id="KW-0648">Protein biosynthesis</keyword>
<keyword id="KW-1185">Reference proteome</keyword>
<keyword id="KW-0862">Zinc</keyword>
<gene>
    <name evidence="1" type="primary">cysS</name>
    <name type="ordered locus">RSc1167</name>
    <name type="ORF">RS04577</name>
</gene>
<protein>
    <recommendedName>
        <fullName evidence="1">Cysteine--tRNA ligase</fullName>
        <ecNumber evidence="1">6.1.1.16</ecNumber>
    </recommendedName>
    <alternativeName>
        <fullName evidence="1">Cysteinyl-tRNA synthetase</fullName>
        <shortName evidence="1">CysRS</shortName>
    </alternativeName>
</protein>
<feature type="chain" id="PRO_0000159463" description="Cysteine--tRNA ligase">
    <location>
        <begin position="1"/>
        <end position="465"/>
    </location>
</feature>
<feature type="short sequence motif" description="'HIGH' region">
    <location>
        <begin position="32"/>
        <end position="42"/>
    </location>
</feature>
<feature type="short sequence motif" description="'KMSKS' region">
    <location>
        <begin position="271"/>
        <end position="275"/>
    </location>
</feature>
<feature type="binding site" evidence="1">
    <location>
        <position position="30"/>
    </location>
    <ligand>
        <name>Zn(2+)</name>
        <dbReference type="ChEBI" id="CHEBI:29105"/>
    </ligand>
</feature>
<feature type="binding site" evidence="1">
    <location>
        <position position="214"/>
    </location>
    <ligand>
        <name>Zn(2+)</name>
        <dbReference type="ChEBI" id="CHEBI:29105"/>
    </ligand>
</feature>
<feature type="binding site" evidence="1">
    <location>
        <position position="239"/>
    </location>
    <ligand>
        <name>Zn(2+)</name>
        <dbReference type="ChEBI" id="CHEBI:29105"/>
    </ligand>
</feature>
<feature type="binding site" evidence="1">
    <location>
        <position position="243"/>
    </location>
    <ligand>
        <name>Zn(2+)</name>
        <dbReference type="ChEBI" id="CHEBI:29105"/>
    </ligand>
</feature>
<feature type="binding site" evidence="1">
    <location>
        <position position="274"/>
    </location>
    <ligand>
        <name>ATP</name>
        <dbReference type="ChEBI" id="CHEBI:30616"/>
    </ligand>
</feature>
<reference key="1">
    <citation type="journal article" date="2002" name="Nature">
        <title>Genome sequence of the plant pathogen Ralstonia solanacearum.</title>
        <authorList>
            <person name="Salanoubat M."/>
            <person name="Genin S."/>
            <person name="Artiguenave F."/>
            <person name="Gouzy J."/>
            <person name="Mangenot S."/>
            <person name="Arlat M."/>
            <person name="Billault A."/>
            <person name="Brottier P."/>
            <person name="Camus J.-C."/>
            <person name="Cattolico L."/>
            <person name="Chandler M."/>
            <person name="Choisne N."/>
            <person name="Claudel-Renard C."/>
            <person name="Cunnac S."/>
            <person name="Demange N."/>
            <person name="Gaspin C."/>
            <person name="Lavie M."/>
            <person name="Moisan A."/>
            <person name="Robert C."/>
            <person name="Saurin W."/>
            <person name="Schiex T."/>
            <person name="Siguier P."/>
            <person name="Thebault P."/>
            <person name="Whalen M."/>
            <person name="Wincker P."/>
            <person name="Levy M."/>
            <person name="Weissenbach J."/>
            <person name="Boucher C.A."/>
        </authorList>
    </citation>
    <scope>NUCLEOTIDE SEQUENCE [LARGE SCALE GENOMIC DNA]</scope>
    <source>
        <strain>ATCC BAA-1114 / GMI1000</strain>
    </source>
</reference>
<proteinExistence type="inferred from homology"/>
<organism>
    <name type="scientific">Ralstonia nicotianae (strain ATCC BAA-1114 / GMI1000)</name>
    <name type="common">Ralstonia solanacearum</name>
    <dbReference type="NCBI Taxonomy" id="267608"/>
    <lineage>
        <taxon>Bacteria</taxon>
        <taxon>Pseudomonadati</taxon>
        <taxon>Pseudomonadota</taxon>
        <taxon>Betaproteobacteria</taxon>
        <taxon>Burkholderiales</taxon>
        <taxon>Burkholderiaceae</taxon>
        <taxon>Ralstonia</taxon>
        <taxon>Ralstonia solanacearum species complex</taxon>
    </lineage>
</organism>
<accession>Q8Y077</accession>
<dbReference type="EC" id="6.1.1.16" evidence="1"/>
<dbReference type="EMBL" id="AL646052">
    <property type="protein sequence ID" value="CAD14869.1"/>
    <property type="molecule type" value="Genomic_DNA"/>
</dbReference>
<dbReference type="RefSeq" id="WP_011001117.1">
    <property type="nucleotide sequence ID" value="NC_003295.1"/>
</dbReference>
<dbReference type="SMR" id="Q8Y077"/>
<dbReference type="STRING" id="267608.RSc1167"/>
<dbReference type="EnsemblBacteria" id="CAD14869">
    <property type="protein sequence ID" value="CAD14869"/>
    <property type="gene ID" value="RSc1167"/>
</dbReference>
<dbReference type="KEGG" id="rso:RSc1167"/>
<dbReference type="eggNOG" id="COG0215">
    <property type="taxonomic scope" value="Bacteria"/>
</dbReference>
<dbReference type="HOGENOM" id="CLU_013528_0_1_4"/>
<dbReference type="Proteomes" id="UP000001436">
    <property type="component" value="Chromosome"/>
</dbReference>
<dbReference type="GO" id="GO:0005829">
    <property type="term" value="C:cytosol"/>
    <property type="evidence" value="ECO:0007669"/>
    <property type="project" value="TreeGrafter"/>
</dbReference>
<dbReference type="GO" id="GO:0005524">
    <property type="term" value="F:ATP binding"/>
    <property type="evidence" value="ECO:0007669"/>
    <property type="project" value="UniProtKB-UniRule"/>
</dbReference>
<dbReference type="GO" id="GO:0004817">
    <property type="term" value="F:cysteine-tRNA ligase activity"/>
    <property type="evidence" value="ECO:0007669"/>
    <property type="project" value="UniProtKB-UniRule"/>
</dbReference>
<dbReference type="GO" id="GO:0008270">
    <property type="term" value="F:zinc ion binding"/>
    <property type="evidence" value="ECO:0007669"/>
    <property type="project" value="UniProtKB-UniRule"/>
</dbReference>
<dbReference type="GO" id="GO:0006423">
    <property type="term" value="P:cysteinyl-tRNA aminoacylation"/>
    <property type="evidence" value="ECO:0007669"/>
    <property type="project" value="UniProtKB-UniRule"/>
</dbReference>
<dbReference type="CDD" id="cd07963">
    <property type="entry name" value="Anticodon_Ia_Cys"/>
    <property type="match status" value="1"/>
</dbReference>
<dbReference type="CDD" id="cd00672">
    <property type="entry name" value="CysRS_core"/>
    <property type="match status" value="1"/>
</dbReference>
<dbReference type="FunFam" id="3.40.50.620:FF:000009">
    <property type="entry name" value="Cysteine--tRNA ligase"/>
    <property type="match status" value="1"/>
</dbReference>
<dbReference type="Gene3D" id="1.20.120.1910">
    <property type="entry name" value="Cysteine-tRNA ligase, C-terminal anti-codon recognition domain"/>
    <property type="match status" value="1"/>
</dbReference>
<dbReference type="Gene3D" id="3.40.50.620">
    <property type="entry name" value="HUPs"/>
    <property type="match status" value="1"/>
</dbReference>
<dbReference type="HAMAP" id="MF_00041">
    <property type="entry name" value="Cys_tRNA_synth"/>
    <property type="match status" value="1"/>
</dbReference>
<dbReference type="InterPro" id="IPR015803">
    <property type="entry name" value="Cys-tRNA-ligase"/>
</dbReference>
<dbReference type="InterPro" id="IPR015273">
    <property type="entry name" value="Cys-tRNA-synt_Ia_DALR"/>
</dbReference>
<dbReference type="InterPro" id="IPR024909">
    <property type="entry name" value="Cys-tRNA/MSH_ligase"/>
</dbReference>
<dbReference type="InterPro" id="IPR014729">
    <property type="entry name" value="Rossmann-like_a/b/a_fold"/>
</dbReference>
<dbReference type="InterPro" id="IPR032678">
    <property type="entry name" value="tRNA-synt_1_cat_dom"/>
</dbReference>
<dbReference type="InterPro" id="IPR009080">
    <property type="entry name" value="tRNAsynth_Ia_anticodon-bd"/>
</dbReference>
<dbReference type="NCBIfam" id="TIGR00435">
    <property type="entry name" value="cysS"/>
    <property type="match status" value="1"/>
</dbReference>
<dbReference type="PANTHER" id="PTHR10890:SF3">
    <property type="entry name" value="CYSTEINE--TRNA LIGASE, CYTOPLASMIC"/>
    <property type="match status" value="1"/>
</dbReference>
<dbReference type="PANTHER" id="PTHR10890">
    <property type="entry name" value="CYSTEINYL-TRNA SYNTHETASE"/>
    <property type="match status" value="1"/>
</dbReference>
<dbReference type="Pfam" id="PF09190">
    <property type="entry name" value="DALR_2"/>
    <property type="match status" value="1"/>
</dbReference>
<dbReference type="Pfam" id="PF01406">
    <property type="entry name" value="tRNA-synt_1e"/>
    <property type="match status" value="1"/>
</dbReference>
<dbReference type="PRINTS" id="PR00983">
    <property type="entry name" value="TRNASYNTHCYS"/>
</dbReference>
<dbReference type="SMART" id="SM00840">
    <property type="entry name" value="DALR_2"/>
    <property type="match status" value="1"/>
</dbReference>
<dbReference type="SUPFAM" id="SSF47323">
    <property type="entry name" value="Anticodon-binding domain of a subclass of class I aminoacyl-tRNA synthetases"/>
    <property type="match status" value="1"/>
</dbReference>
<dbReference type="SUPFAM" id="SSF52374">
    <property type="entry name" value="Nucleotidylyl transferase"/>
    <property type="match status" value="1"/>
</dbReference>